<evidence type="ECO:0000255" key="1">
    <source>
        <dbReference type="HAMAP-Rule" id="MF_01593"/>
    </source>
</evidence>
<keyword id="KW-0031">Aminopeptidase</keyword>
<keyword id="KW-0963">Cytoplasm</keyword>
<keyword id="KW-0378">Hydrolase</keyword>
<keyword id="KW-0479">Metal-binding</keyword>
<keyword id="KW-0482">Metalloprotease</keyword>
<keyword id="KW-0645">Protease</keyword>
<keyword id="KW-0862">Zinc</keyword>
<sequence>MIKWLWKANKPQAEMLAQWHEALNIPLLAPLNEPEQQRLVSVASQLLQQKRFIPLQGLILTPLMQARLALLFALPVMELGAKWLDGFHEVLIYPSPFIVAEDWQDDLGLVHSGQSVQSGQSWEQGPIVLNWQDIQDSFDLSGFNLVIHEAAHKLDMRNGGHSNGVPPIAMRDVAVWEHDLHHAMDNIQDEIDMVGVEGASMDAYAASNPAECFAVLSEYFFSAPELLEGRFPAVYQHFCRFYRQDPLARLKRWENSLADNPPPENTHSHR</sequence>
<name>MTFA_YERPP</name>
<accession>A4TKG8</accession>
<proteinExistence type="inferred from homology"/>
<comment type="function">
    <text evidence="1">Involved in the modulation of the activity of the glucose-phosphotransferase system (glucose-PTS). Interacts with the transcriptional repressor Mlc, preventing its interaction with DNA and leading to the modulation of expression of genes regulated by Mlc, including ptsG, which encodes the PTS system glucose-specific EIICB component.</text>
</comment>
<comment type="function">
    <text evidence="1">Shows zinc-dependent metallopeptidase activity.</text>
</comment>
<comment type="cofactor">
    <cofactor evidence="1">
        <name>Zn(2+)</name>
        <dbReference type="ChEBI" id="CHEBI:29105"/>
    </cofactor>
    <text evidence="1">Binds 1 zinc ion per subunit.</text>
</comment>
<comment type="subunit">
    <text evidence="1">Interacts with Mlc.</text>
</comment>
<comment type="subcellular location">
    <subcellularLocation>
        <location evidence="1">Cytoplasm</location>
    </subcellularLocation>
</comment>
<comment type="similarity">
    <text evidence="1">Belongs to the MtfA family.</text>
</comment>
<organism>
    <name type="scientific">Yersinia pestis (strain Pestoides F)</name>
    <dbReference type="NCBI Taxonomy" id="386656"/>
    <lineage>
        <taxon>Bacteria</taxon>
        <taxon>Pseudomonadati</taxon>
        <taxon>Pseudomonadota</taxon>
        <taxon>Gammaproteobacteria</taxon>
        <taxon>Enterobacterales</taxon>
        <taxon>Yersiniaceae</taxon>
        <taxon>Yersinia</taxon>
    </lineage>
</organism>
<gene>
    <name evidence="1" type="primary">mtfA</name>
    <name type="ordered locus">YPDSF_1391</name>
</gene>
<dbReference type="EC" id="3.4.11.-" evidence="1"/>
<dbReference type="EMBL" id="CP000668">
    <property type="protein sequence ID" value="ABP39780.1"/>
    <property type="molecule type" value="Genomic_DNA"/>
</dbReference>
<dbReference type="RefSeq" id="WP_002211042.1">
    <property type="nucleotide sequence ID" value="NZ_CP009715.1"/>
</dbReference>
<dbReference type="SMR" id="A4TKG8"/>
<dbReference type="GeneID" id="57976845"/>
<dbReference type="KEGG" id="ypp:YPDSF_1391"/>
<dbReference type="PATRIC" id="fig|386656.14.peg.2401"/>
<dbReference type="GO" id="GO:0005829">
    <property type="term" value="C:cytosol"/>
    <property type="evidence" value="ECO:0007669"/>
    <property type="project" value="TreeGrafter"/>
</dbReference>
<dbReference type="GO" id="GO:0004177">
    <property type="term" value="F:aminopeptidase activity"/>
    <property type="evidence" value="ECO:0007669"/>
    <property type="project" value="UniProtKB-UniRule"/>
</dbReference>
<dbReference type="GO" id="GO:0008237">
    <property type="term" value="F:metallopeptidase activity"/>
    <property type="evidence" value="ECO:0007669"/>
    <property type="project" value="UniProtKB-UniRule"/>
</dbReference>
<dbReference type="GO" id="GO:0008270">
    <property type="term" value="F:zinc ion binding"/>
    <property type="evidence" value="ECO:0007669"/>
    <property type="project" value="UniProtKB-UniRule"/>
</dbReference>
<dbReference type="GO" id="GO:0006508">
    <property type="term" value="P:proteolysis"/>
    <property type="evidence" value="ECO:0007669"/>
    <property type="project" value="UniProtKB-KW"/>
</dbReference>
<dbReference type="CDD" id="cd20169">
    <property type="entry name" value="Peptidase_M90_mtfA"/>
    <property type="match status" value="1"/>
</dbReference>
<dbReference type="FunFam" id="1.10.472.150:FF:000001">
    <property type="entry name" value="Protein MtfA"/>
    <property type="match status" value="1"/>
</dbReference>
<dbReference type="FunFam" id="3.40.390.10:FF:000012">
    <property type="entry name" value="Protein MtfA"/>
    <property type="match status" value="1"/>
</dbReference>
<dbReference type="Gene3D" id="3.40.390.10">
    <property type="entry name" value="Collagenase (Catalytic Domain)"/>
    <property type="match status" value="1"/>
</dbReference>
<dbReference type="Gene3D" id="1.10.472.150">
    <property type="entry name" value="Glucose-regulated metallo-peptidase M90, N-terminal domain"/>
    <property type="match status" value="1"/>
</dbReference>
<dbReference type="HAMAP" id="MF_01593">
    <property type="entry name" value="MtfA"/>
    <property type="match status" value="1"/>
</dbReference>
<dbReference type="InterPro" id="IPR024079">
    <property type="entry name" value="MetalloPept_cat_dom_sf"/>
</dbReference>
<dbReference type="InterPro" id="IPR057256">
    <property type="entry name" value="MtfA_enterob"/>
</dbReference>
<dbReference type="InterPro" id="IPR010384">
    <property type="entry name" value="MtfA_fam"/>
</dbReference>
<dbReference type="InterPro" id="IPR042252">
    <property type="entry name" value="MtfA_N"/>
</dbReference>
<dbReference type="NCBIfam" id="NF011939">
    <property type="entry name" value="PRK15410.1"/>
    <property type="match status" value="1"/>
</dbReference>
<dbReference type="PANTHER" id="PTHR30164">
    <property type="entry name" value="MTFA PEPTIDASE"/>
    <property type="match status" value="1"/>
</dbReference>
<dbReference type="PANTHER" id="PTHR30164:SF2">
    <property type="entry name" value="PROTEIN MTFA"/>
    <property type="match status" value="1"/>
</dbReference>
<dbReference type="Pfam" id="PF06167">
    <property type="entry name" value="Peptidase_M90"/>
    <property type="match status" value="1"/>
</dbReference>
<dbReference type="SUPFAM" id="SSF55486">
    <property type="entry name" value="Metalloproteases ('zincins'), catalytic domain"/>
    <property type="match status" value="1"/>
</dbReference>
<feature type="chain" id="PRO_0000316332" description="Mlc titration factor A">
    <location>
        <begin position="1"/>
        <end position="270"/>
    </location>
</feature>
<feature type="binding site" evidence="1">
    <location>
        <position position="111"/>
    </location>
    <ligand>
        <name>Zn(2+)</name>
        <dbReference type="ChEBI" id="CHEBI:29105"/>
    </ligand>
</feature>
<feature type="binding site" evidence="1">
    <location>
        <position position="148"/>
    </location>
    <ligand>
        <name>Zn(2+)</name>
        <dbReference type="ChEBI" id="CHEBI:29105"/>
    </ligand>
</feature>
<feature type="binding site" evidence="1">
    <location>
        <position position="152"/>
    </location>
    <ligand>
        <name>Zn(2+)</name>
        <dbReference type="ChEBI" id="CHEBI:29105"/>
    </ligand>
</feature>
<feature type="binding site" evidence="1">
    <location>
        <position position="211"/>
    </location>
    <ligand>
        <name>Zn(2+)</name>
        <dbReference type="ChEBI" id="CHEBI:29105"/>
    </ligand>
</feature>
<reference key="1">
    <citation type="submission" date="2007-02" db="EMBL/GenBank/DDBJ databases">
        <title>Complete sequence of chromosome of Yersinia pestis Pestoides F.</title>
        <authorList>
            <consortium name="US DOE Joint Genome Institute"/>
            <person name="Copeland A."/>
            <person name="Lucas S."/>
            <person name="Lapidus A."/>
            <person name="Barry K."/>
            <person name="Detter J.C."/>
            <person name="Glavina del Rio T."/>
            <person name="Hammon N."/>
            <person name="Israni S."/>
            <person name="Dalin E."/>
            <person name="Tice H."/>
            <person name="Pitluck S."/>
            <person name="Di Bartolo G."/>
            <person name="Chain P."/>
            <person name="Malfatti S."/>
            <person name="Shin M."/>
            <person name="Vergez L."/>
            <person name="Schmutz J."/>
            <person name="Larimer F."/>
            <person name="Land M."/>
            <person name="Hauser L."/>
            <person name="Worsham P."/>
            <person name="Chu M."/>
            <person name="Bearden S."/>
            <person name="Garcia E."/>
            <person name="Richardson P."/>
        </authorList>
    </citation>
    <scope>NUCLEOTIDE SEQUENCE [LARGE SCALE GENOMIC DNA]</scope>
    <source>
        <strain>Pestoides F</strain>
    </source>
</reference>
<protein>
    <recommendedName>
        <fullName evidence="1">Mlc titration factor A</fullName>
    </recommendedName>
    <alternativeName>
        <fullName evidence="1">Probable zinc metallopeptidase MtfA</fullName>
        <ecNumber evidence="1">3.4.11.-</ecNumber>
    </alternativeName>
</protein>